<dbReference type="EMBL" id="AB195262">
    <property type="protein sequence ID" value="BAD97693.1"/>
    <property type="molecule type" value="mRNA"/>
</dbReference>
<dbReference type="RefSeq" id="NP_001019748.1">
    <property type="nucleotide sequence ID" value="NM_001024577.2"/>
</dbReference>
<dbReference type="RefSeq" id="XP_015134353.1">
    <property type="nucleotide sequence ID" value="XM_015278867.1"/>
</dbReference>
<dbReference type="RefSeq" id="XP_015134354.1">
    <property type="nucleotide sequence ID" value="XM_015278868.1"/>
</dbReference>
<dbReference type="RefSeq" id="XP_040562218.1">
    <property type="nucleotide sequence ID" value="XM_040706284.2"/>
</dbReference>
<dbReference type="RefSeq" id="XP_046754950.1">
    <property type="nucleotide sequence ID" value="XM_046898994.1"/>
</dbReference>
<dbReference type="RefSeq" id="XP_046754951.1">
    <property type="nucleotide sequence ID" value="XM_046898995.1"/>
</dbReference>
<dbReference type="RefSeq" id="XP_046754952.1">
    <property type="nucleotide sequence ID" value="XM_046898996.1"/>
</dbReference>
<dbReference type="RefSeq" id="XP_046754953.1">
    <property type="nucleotide sequence ID" value="XM_046898997.1"/>
</dbReference>
<dbReference type="RefSeq" id="XP_046754954.1">
    <property type="nucleotide sequence ID" value="XM_046898998.1"/>
</dbReference>
<dbReference type="RefSeq" id="XP_046754955.1">
    <property type="nucleotide sequence ID" value="XM_046898999.1"/>
</dbReference>
<dbReference type="RefSeq" id="XP_046754956.1">
    <property type="nucleotide sequence ID" value="XM_046899000.1"/>
</dbReference>
<dbReference type="RefSeq" id="XP_046754957.1">
    <property type="nucleotide sequence ID" value="XM_046899001.1"/>
</dbReference>
<dbReference type="RefSeq" id="XP_046754958.1">
    <property type="nucleotide sequence ID" value="XM_046899002.1"/>
</dbReference>
<dbReference type="RefSeq" id="XP_046780689.1">
    <property type="nucleotide sequence ID" value="XM_046924733.1"/>
</dbReference>
<dbReference type="RefSeq" id="XP_046780690.1">
    <property type="nucleotide sequence ID" value="XM_046924734.1"/>
</dbReference>
<dbReference type="RefSeq" id="XP_046780691.1">
    <property type="nucleotide sequence ID" value="XM_046924735.1"/>
</dbReference>
<dbReference type="RefSeq" id="XP_046780692.1">
    <property type="nucleotide sequence ID" value="XM_046924736.1"/>
</dbReference>
<dbReference type="RefSeq" id="XP_046780693.1">
    <property type="nucleotide sequence ID" value="XM_046924737.1"/>
</dbReference>
<dbReference type="RefSeq" id="XP_046780694.1">
    <property type="nucleotide sequence ID" value="XM_046924738.1"/>
</dbReference>
<dbReference type="RefSeq" id="XP_046780695.1">
    <property type="nucleotide sequence ID" value="XM_046924739.1"/>
</dbReference>
<dbReference type="RefSeq" id="XP_046780696.1">
    <property type="nucleotide sequence ID" value="XM_046924740.1"/>
</dbReference>
<dbReference type="RefSeq" id="XP_046780697.1">
    <property type="nucleotide sequence ID" value="XM_046924741.1"/>
</dbReference>
<dbReference type="RefSeq" id="XP_046780698.1">
    <property type="nucleotide sequence ID" value="XM_046924742.1"/>
</dbReference>
<dbReference type="SMR" id="Q50L44"/>
<dbReference type="FunCoup" id="Q50L44">
    <property type="interactions" value="279"/>
</dbReference>
<dbReference type="STRING" id="9031.ENSGALP00000004263"/>
<dbReference type="GlyCosmos" id="Q50L44">
    <property type="glycosylation" value="11 sites, No reported glycans"/>
</dbReference>
<dbReference type="GlyGen" id="Q50L44">
    <property type="glycosylation" value="11 sites"/>
</dbReference>
<dbReference type="PaxDb" id="9031-ENSGALP00000004263"/>
<dbReference type="Ensembl" id="ENSGALT00010050221.1">
    <property type="protein sequence ID" value="ENSGALP00010029678.1"/>
    <property type="gene ID" value="ENSGALG00010020771.1"/>
</dbReference>
<dbReference type="Ensembl" id="ENSGALT00010050223.1">
    <property type="protein sequence ID" value="ENSGALP00010029680.1"/>
    <property type="gene ID" value="ENSGALG00010020771.1"/>
</dbReference>
<dbReference type="Ensembl" id="ENSGALT00010050225.1">
    <property type="protein sequence ID" value="ENSGALP00010029682.1"/>
    <property type="gene ID" value="ENSGALG00010020771.1"/>
</dbReference>
<dbReference type="Ensembl" id="ENSGALT00010050227.1">
    <property type="protein sequence ID" value="ENSGALP00010029684.1"/>
    <property type="gene ID" value="ENSGALG00010020771.1"/>
</dbReference>
<dbReference type="Ensembl" id="ENSGALT00010050228.1">
    <property type="protein sequence ID" value="ENSGALP00010029685.1"/>
    <property type="gene ID" value="ENSGALG00010020771.1"/>
</dbReference>
<dbReference type="Ensembl" id="ENSGALT00010050232.1">
    <property type="protein sequence ID" value="ENSGALP00010029688.1"/>
    <property type="gene ID" value="ENSGALG00010020771.1"/>
</dbReference>
<dbReference type="Ensembl" id="ENSGALT00010050239.1">
    <property type="protein sequence ID" value="ENSGALP00010029692.1"/>
    <property type="gene ID" value="ENSGALG00010020771.1"/>
</dbReference>
<dbReference type="Ensembl" id="ENSGALT00010050243.1">
    <property type="protein sequence ID" value="ENSGALP00010029694.1"/>
    <property type="gene ID" value="ENSGALG00010020771.1"/>
</dbReference>
<dbReference type="Ensembl" id="ENSGALT00010050246.1">
    <property type="protein sequence ID" value="ENSGALP00010029696.1"/>
    <property type="gene ID" value="ENSGALG00010020771.1"/>
</dbReference>
<dbReference type="Ensembl" id="ENSGALT00010050249.1">
    <property type="protein sequence ID" value="ENSGALP00010029697.1"/>
    <property type="gene ID" value="ENSGALG00010020771.1"/>
</dbReference>
<dbReference type="GeneID" id="415344"/>
<dbReference type="KEGG" id="gga:415344"/>
<dbReference type="CTD" id="84894"/>
<dbReference type="VEuPathDB" id="HostDB:geneid_415344"/>
<dbReference type="eggNOG" id="KOG0619">
    <property type="taxonomic scope" value="Eukaryota"/>
</dbReference>
<dbReference type="GeneTree" id="ENSGT00940000154996"/>
<dbReference type="HOGENOM" id="CLU_000288_18_24_1"/>
<dbReference type="InParanoid" id="Q50L44"/>
<dbReference type="OMA" id="MVAREAT"/>
<dbReference type="OrthoDB" id="10061535at2759"/>
<dbReference type="PhylomeDB" id="Q50L44"/>
<dbReference type="TreeFam" id="TF334360"/>
<dbReference type="PRO" id="PR:Q50L44"/>
<dbReference type="Proteomes" id="UP000000539">
    <property type="component" value="Chromosome 10"/>
</dbReference>
<dbReference type="GO" id="GO:0031012">
    <property type="term" value="C:extracellular matrix"/>
    <property type="evidence" value="ECO:0000318"/>
    <property type="project" value="GO_Central"/>
</dbReference>
<dbReference type="GO" id="GO:0005615">
    <property type="term" value="C:extracellular space"/>
    <property type="evidence" value="ECO:0000318"/>
    <property type="project" value="GO_Central"/>
</dbReference>
<dbReference type="GO" id="GO:0005886">
    <property type="term" value="C:plasma membrane"/>
    <property type="evidence" value="ECO:0007669"/>
    <property type="project" value="UniProtKB-SubCell"/>
</dbReference>
<dbReference type="GO" id="GO:0005154">
    <property type="term" value="F:epidermal growth factor receptor binding"/>
    <property type="evidence" value="ECO:0000318"/>
    <property type="project" value="GO_Central"/>
</dbReference>
<dbReference type="CDD" id="cd20969">
    <property type="entry name" value="IgI_Lingo-1"/>
    <property type="match status" value="1"/>
</dbReference>
<dbReference type="FunFam" id="2.60.40.10:FF:000076">
    <property type="entry name" value="Leucine-rich repeat and Ig domain-containing 4"/>
    <property type="match status" value="1"/>
</dbReference>
<dbReference type="FunFam" id="3.80.10.10:FF:000014">
    <property type="entry name" value="Leucine-rich repeat and immunoglobulin-like domain-containing nogo receptor-interacting protein 1"/>
    <property type="match status" value="1"/>
</dbReference>
<dbReference type="Gene3D" id="2.60.40.10">
    <property type="entry name" value="Immunoglobulins"/>
    <property type="match status" value="1"/>
</dbReference>
<dbReference type="Gene3D" id="3.80.10.10">
    <property type="entry name" value="Ribonuclease Inhibitor"/>
    <property type="match status" value="1"/>
</dbReference>
<dbReference type="InterPro" id="IPR007110">
    <property type="entry name" value="Ig-like_dom"/>
</dbReference>
<dbReference type="InterPro" id="IPR036179">
    <property type="entry name" value="Ig-like_dom_sf"/>
</dbReference>
<dbReference type="InterPro" id="IPR013783">
    <property type="entry name" value="Ig-like_fold"/>
</dbReference>
<dbReference type="InterPro" id="IPR013098">
    <property type="entry name" value="Ig_I-set"/>
</dbReference>
<dbReference type="InterPro" id="IPR003599">
    <property type="entry name" value="Ig_sub"/>
</dbReference>
<dbReference type="InterPro" id="IPR003598">
    <property type="entry name" value="Ig_sub2"/>
</dbReference>
<dbReference type="InterPro" id="IPR001611">
    <property type="entry name" value="Leu-rich_rpt"/>
</dbReference>
<dbReference type="InterPro" id="IPR003591">
    <property type="entry name" value="Leu-rich_rpt_typical-subtyp"/>
</dbReference>
<dbReference type="InterPro" id="IPR032675">
    <property type="entry name" value="LRR_dom_sf"/>
</dbReference>
<dbReference type="InterPro" id="IPR050541">
    <property type="entry name" value="LRR_TM_domain-containing"/>
</dbReference>
<dbReference type="PANTHER" id="PTHR24369">
    <property type="entry name" value="ANTIGEN BSP, PUTATIVE-RELATED"/>
    <property type="match status" value="1"/>
</dbReference>
<dbReference type="PANTHER" id="PTHR24369:SF178">
    <property type="entry name" value="LEUCINE-RICH REPEAT AND IMMUNOGLOBULIN-LIKE DOMAIN-CONTAINING NOGO RECEPTOR-INTERACTING PROTEIN 1"/>
    <property type="match status" value="1"/>
</dbReference>
<dbReference type="Pfam" id="PF07679">
    <property type="entry name" value="I-set"/>
    <property type="match status" value="1"/>
</dbReference>
<dbReference type="Pfam" id="PF13855">
    <property type="entry name" value="LRR_8"/>
    <property type="match status" value="3"/>
</dbReference>
<dbReference type="SMART" id="SM00409">
    <property type="entry name" value="IG"/>
    <property type="match status" value="1"/>
</dbReference>
<dbReference type="SMART" id="SM00408">
    <property type="entry name" value="IGc2"/>
    <property type="match status" value="1"/>
</dbReference>
<dbReference type="SMART" id="SM00369">
    <property type="entry name" value="LRR_TYP"/>
    <property type="match status" value="10"/>
</dbReference>
<dbReference type="SUPFAM" id="SSF48726">
    <property type="entry name" value="Immunoglobulin"/>
    <property type="match status" value="1"/>
</dbReference>
<dbReference type="SUPFAM" id="SSF52058">
    <property type="entry name" value="L domain-like"/>
    <property type="match status" value="1"/>
</dbReference>
<dbReference type="PROSITE" id="PS50835">
    <property type="entry name" value="IG_LIKE"/>
    <property type="match status" value="1"/>
</dbReference>
<dbReference type="PROSITE" id="PS51450">
    <property type="entry name" value="LRR"/>
    <property type="match status" value="10"/>
</dbReference>
<evidence type="ECO:0000250" key="1"/>
<evidence type="ECO:0000255" key="2"/>
<evidence type="ECO:0000255" key="3">
    <source>
        <dbReference type="PROSITE-ProRule" id="PRU00114"/>
    </source>
</evidence>
<evidence type="ECO:0000269" key="4">
    <source>
    </source>
</evidence>
<reference key="1">
    <citation type="journal article" date="2005" name="Gene Expr. Patterns">
        <title>Expression pattern of LINGO-1 in the developing nervous system of the chick embryo.</title>
        <authorList>
            <person name="Okafuji T."/>
            <person name="Tanaka H."/>
        </authorList>
    </citation>
    <scope>NUCLEOTIDE SEQUENCE [MRNA]</scope>
    <scope>DEVELOPMENTAL STAGE</scope>
</reference>
<proteinExistence type="evidence at transcript level"/>
<name>LIGO1_CHICK</name>
<protein>
    <recommendedName>
        <fullName>Leucine-rich repeat and immunoglobulin-like domain-containing nogo receptor-interacting protein 1</fullName>
        <shortName>cLINGO-1</shortName>
    </recommendedName>
</protein>
<accession>Q50L44</accession>
<sequence length="613" mass="69580">MLAGEASMRSPILACWQPILLLMLGSILSGSATGCPPRCECSAQERAVLCHRKRFMVVPEGIPTETRQLDLGKNRIKTLNQDEFANYPHLEELELNENIISAIEPGAFNNLFNLRTLGLRSNRLKLIPLGVFTGLSNLTKLDISENKIVILLDYMFQDLYNLKSLEVGDNDLVYISHRAFSGLNSLEQLTLEKCNLTSIPTEALSHLHGLIVLRLRHLNINAIRDYSFKRLYRLKVLEISHWPYLDTMTSNCLYGLNLTSLSITHCNLTSIPYVSVRHLVYLRFLNLSYNPIVTIEGSMLHDLLRLQEIQLVGGQLTTVEPFAFRGLNYLRILNVSGNLLTTLEESAFHSVGNLETLILDNNPLACDCRLLWVFRRRWRLNFNKQQPTCSTPEFVQGKEFKDFPDVLLPNYFTCRRARIRDRKPQQIFVDEGHTVHFVCRADGDPPPAIMWLSPRKHLISTKTNGRLTVFPDGTLEVRYAQIQDNGTYLCIASNAGGNDTMLAHLHVRSYSPDWPHQPNKTFAFISNQPNESDANSTRATVPFPFDIKTLIIATTMGFISFLGVVLFCLVLLFLWSRGKGNTKHNIEIEYVPRKSDAGISSADAPRKFNMKMI</sequence>
<keyword id="KW-1003">Cell membrane</keyword>
<keyword id="KW-1015">Disulfide bond</keyword>
<keyword id="KW-0325">Glycoprotein</keyword>
<keyword id="KW-0393">Immunoglobulin domain</keyword>
<keyword id="KW-0433">Leucine-rich repeat</keyword>
<keyword id="KW-0472">Membrane</keyword>
<keyword id="KW-1185">Reference proteome</keyword>
<keyword id="KW-0677">Repeat</keyword>
<keyword id="KW-0732">Signal</keyword>
<keyword id="KW-0812">Transmembrane</keyword>
<keyword id="KW-1133">Transmembrane helix</keyword>
<feature type="signal peptide" evidence="2">
    <location>
        <begin position="1"/>
        <end position="34"/>
    </location>
</feature>
<feature type="chain" id="PRO_0000328646" description="Leucine-rich repeat and immunoglobulin-like domain-containing nogo receptor-interacting protein 1">
    <location>
        <begin position="35"/>
        <end position="613"/>
    </location>
</feature>
<feature type="topological domain" description="Extracellular" evidence="2">
    <location>
        <begin position="35"/>
        <end position="554"/>
    </location>
</feature>
<feature type="transmembrane region" description="Helical" evidence="2">
    <location>
        <begin position="555"/>
        <end position="575"/>
    </location>
</feature>
<feature type="topological domain" description="Cytoplasmic" evidence="2">
    <location>
        <begin position="576"/>
        <end position="613"/>
    </location>
</feature>
<feature type="domain" description="LRRNT">
    <location>
        <begin position="35"/>
        <end position="64"/>
    </location>
</feature>
<feature type="repeat" description="LRR 1">
    <location>
        <begin position="65"/>
        <end position="86"/>
    </location>
</feature>
<feature type="repeat" description="LRR 2">
    <location>
        <begin position="89"/>
        <end position="110"/>
    </location>
</feature>
<feature type="repeat" description="LRR 3">
    <location>
        <begin position="113"/>
        <end position="134"/>
    </location>
</feature>
<feature type="repeat" description="LRR 4">
    <location>
        <begin position="137"/>
        <end position="158"/>
    </location>
</feature>
<feature type="repeat" description="LRR 5">
    <location>
        <begin position="161"/>
        <end position="182"/>
    </location>
</feature>
<feature type="repeat" description="LRR 6">
    <location>
        <begin position="185"/>
        <end position="206"/>
    </location>
</feature>
<feature type="repeat" description="LRR 7">
    <location>
        <begin position="209"/>
        <end position="230"/>
    </location>
</feature>
<feature type="repeat" description="LRR 8">
    <location>
        <begin position="257"/>
        <end position="278"/>
    </location>
</feature>
<feature type="repeat" description="LRR 9">
    <location>
        <begin position="281"/>
        <end position="302"/>
    </location>
</feature>
<feature type="repeat" description="LRR 10">
    <location>
        <begin position="305"/>
        <end position="326"/>
    </location>
</feature>
<feature type="repeat" description="LRR 11">
    <location>
        <begin position="329"/>
        <end position="350"/>
    </location>
</feature>
<feature type="domain" description="LRRCT">
    <location>
        <begin position="362"/>
        <end position="416"/>
    </location>
</feature>
<feature type="domain" description="Ig-like C2-type">
    <location>
        <begin position="404"/>
        <end position="508"/>
    </location>
</feature>
<feature type="glycosylation site" description="N-linked (GlcNAc...) asparagine" evidence="2">
    <location>
        <position position="137"/>
    </location>
</feature>
<feature type="glycosylation site" description="N-linked (GlcNAc...) asparagine" evidence="2">
    <location>
        <position position="195"/>
    </location>
</feature>
<feature type="glycosylation site" description="N-linked (GlcNAc...) asparagine" evidence="2">
    <location>
        <position position="257"/>
    </location>
</feature>
<feature type="glycosylation site" description="N-linked (GlcNAc...) asparagine" evidence="2">
    <location>
        <position position="267"/>
    </location>
</feature>
<feature type="glycosylation site" description="N-linked (GlcNAc...) asparagine" evidence="2">
    <location>
        <position position="286"/>
    </location>
</feature>
<feature type="glycosylation site" description="N-linked (GlcNAc...) asparagine" evidence="2">
    <location>
        <position position="334"/>
    </location>
</feature>
<feature type="glycosylation site" description="N-linked (GlcNAc...) asparagine" evidence="2">
    <location>
        <position position="485"/>
    </location>
</feature>
<feature type="glycosylation site" description="N-linked (GlcNAc...) asparagine" evidence="2">
    <location>
        <position position="498"/>
    </location>
</feature>
<feature type="glycosylation site" description="N-linked (GlcNAc...) asparagine" evidence="2">
    <location>
        <position position="519"/>
    </location>
</feature>
<feature type="glycosylation site" description="N-linked (GlcNAc...) asparagine" evidence="2">
    <location>
        <position position="530"/>
    </location>
</feature>
<feature type="glycosylation site" description="N-linked (GlcNAc...) asparagine" evidence="2">
    <location>
        <position position="535"/>
    </location>
</feature>
<feature type="disulfide bond" evidence="3">
    <location>
        <begin position="35"/>
        <end position="41"/>
    </location>
</feature>
<feature type="disulfide bond" evidence="3">
    <location>
        <begin position="39"/>
        <end position="50"/>
    </location>
</feature>
<feature type="disulfide bond" evidence="3">
    <location>
        <begin position="366"/>
        <end position="389"/>
    </location>
</feature>
<feature type="disulfide bond" evidence="3">
    <location>
        <begin position="368"/>
        <end position="414"/>
    </location>
</feature>
<feature type="disulfide bond" evidence="3">
    <location>
        <begin position="439"/>
        <end position="490"/>
    </location>
</feature>
<comment type="function">
    <text evidence="1">Functional component of the Nogo receptor signaling complex (RTN4R/NGFR) in RhoA activation responsible for some inhibition of axonal regeneration by myelin-associated factors. Is also an important negative regulator of oligodentrocyte differentiation and axonal myelination (By similarity).</text>
</comment>
<comment type="subunit">
    <text evidence="1">Homotetramer. Forms ternary complex with RTN4R/NGFR and RTN4R/TNFRSF19 (By similarity).</text>
</comment>
<comment type="subcellular location">
    <subcellularLocation>
        <location evidence="1">Cell membrane</location>
        <topology evidence="1">Single-pass type I membrane protein</topology>
    </subcellularLocation>
</comment>
<comment type="developmental stage">
    <text evidence="4">Expressed broadly in the spinal cord, including the ventral portion of the ventricular zone, and motor neurons. Expressed also in the dorsal root ganglion and boundary cap cells at dorsal and ventral roots. In the early embryonic brain, is first expressed in the prosencephalon and the ventral mesencephalon, and later in the telencephalon, the rostral part of the mesencephalon and some parts of the hindbrain. Expressed also in the ventral part of the neural retina and trigeminal and facial nerves.</text>
</comment>
<comment type="PTM">
    <text evidence="1">N-glycosylated. Contains predominantly high-mannose glycans (By similarity).</text>
</comment>
<organism>
    <name type="scientific">Gallus gallus</name>
    <name type="common">Chicken</name>
    <dbReference type="NCBI Taxonomy" id="9031"/>
    <lineage>
        <taxon>Eukaryota</taxon>
        <taxon>Metazoa</taxon>
        <taxon>Chordata</taxon>
        <taxon>Craniata</taxon>
        <taxon>Vertebrata</taxon>
        <taxon>Euteleostomi</taxon>
        <taxon>Archelosauria</taxon>
        <taxon>Archosauria</taxon>
        <taxon>Dinosauria</taxon>
        <taxon>Saurischia</taxon>
        <taxon>Theropoda</taxon>
        <taxon>Coelurosauria</taxon>
        <taxon>Aves</taxon>
        <taxon>Neognathae</taxon>
        <taxon>Galloanserae</taxon>
        <taxon>Galliformes</taxon>
        <taxon>Phasianidae</taxon>
        <taxon>Phasianinae</taxon>
        <taxon>Gallus</taxon>
    </lineage>
</organism>
<gene>
    <name type="primary">LINGO1</name>
</gene>